<dbReference type="EC" id="3.6.1.-" evidence="1"/>
<dbReference type="EMBL" id="CU207366">
    <property type="protein sequence ID" value="CAL65331.1"/>
    <property type="molecule type" value="Genomic_DNA"/>
</dbReference>
<dbReference type="RefSeq" id="WP_011708269.1">
    <property type="nucleotide sequence ID" value="NC_008571.1"/>
</dbReference>
<dbReference type="SMR" id="A0LY86"/>
<dbReference type="STRING" id="411154.GFO_0345"/>
<dbReference type="KEGG" id="gfo:GFO_0345"/>
<dbReference type="eggNOG" id="COG1162">
    <property type="taxonomic scope" value="Bacteria"/>
</dbReference>
<dbReference type="HOGENOM" id="CLU_033617_2_0_10"/>
<dbReference type="OrthoDB" id="9809485at2"/>
<dbReference type="Proteomes" id="UP000000755">
    <property type="component" value="Chromosome"/>
</dbReference>
<dbReference type="GO" id="GO:0005737">
    <property type="term" value="C:cytoplasm"/>
    <property type="evidence" value="ECO:0007669"/>
    <property type="project" value="UniProtKB-SubCell"/>
</dbReference>
<dbReference type="GO" id="GO:0005525">
    <property type="term" value="F:GTP binding"/>
    <property type="evidence" value="ECO:0007669"/>
    <property type="project" value="UniProtKB-UniRule"/>
</dbReference>
<dbReference type="GO" id="GO:0003924">
    <property type="term" value="F:GTPase activity"/>
    <property type="evidence" value="ECO:0007669"/>
    <property type="project" value="UniProtKB-UniRule"/>
</dbReference>
<dbReference type="GO" id="GO:0046872">
    <property type="term" value="F:metal ion binding"/>
    <property type="evidence" value="ECO:0007669"/>
    <property type="project" value="UniProtKB-KW"/>
</dbReference>
<dbReference type="GO" id="GO:0019843">
    <property type="term" value="F:rRNA binding"/>
    <property type="evidence" value="ECO:0007669"/>
    <property type="project" value="UniProtKB-KW"/>
</dbReference>
<dbReference type="GO" id="GO:0042274">
    <property type="term" value="P:ribosomal small subunit biogenesis"/>
    <property type="evidence" value="ECO:0007669"/>
    <property type="project" value="UniProtKB-UniRule"/>
</dbReference>
<dbReference type="CDD" id="cd04466">
    <property type="entry name" value="S1_YloQ_GTPase"/>
    <property type="match status" value="1"/>
</dbReference>
<dbReference type="CDD" id="cd01854">
    <property type="entry name" value="YjeQ_EngC"/>
    <property type="match status" value="1"/>
</dbReference>
<dbReference type="Gene3D" id="2.40.50.140">
    <property type="entry name" value="Nucleic acid-binding proteins"/>
    <property type="match status" value="1"/>
</dbReference>
<dbReference type="Gene3D" id="3.40.50.300">
    <property type="entry name" value="P-loop containing nucleotide triphosphate hydrolases"/>
    <property type="match status" value="1"/>
</dbReference>
<dbReference type="Gene3D" id="1.10.40.50">
    <property type="entry name" value="Probable gtpase engc, domain 3"/>
    <property type="match status" value="1"/>
</dbReference>
<dbReference type="HAMAP" id="MF_01820">
    <property type="entry name" value="GTPase_RsgA"/>
    <property type="match status" value="1"/>
</dbReference>
<dbReference type="InterPro" id="IPR030378">
    <property type="entry name" value="G_CP_dom"/>
</dbReference>
<dbReference type="InterPro" id="IPR012340">
    <property type="entry name" value="NA-bd_OB-fold"/>
</dbReference>
<dbReference type="InterPro" id="IPR027417">
    <property type="entry name" value="P-loop_NTPase"/>
</dbReference>
<dbReference type="InterPro" id="IPR004881">
    <property type="entry name" value="Ribosome_biogen_GTPase_RsgA"/>
</dbReference>
<dbReference type="InterPro" id="IPR010914">
    <property type="entry name" value="RsgA_GTPase_dom"/>
</dbReference>
<dbReference type="InterPro" id="IPR031944">
    <property type="entry name" value="RsgA_N"/>
</dbReference>
<dbReference type="NCBIfam" id="TIGR00157">
    <property type="entry name" value="ribosome small subunit-dependent GTPase A"/>
    <property type="match status" value="1"/>
</dbReference>
<dbReference type="PANTHER" id="PTHR32120">
    <property type="entry name" value="SMALL RIBOSOMAL SUBUNIT BIOGENESIS GTPASE RSGA"/>
    <property type="match status" value="1"/>
</dbReference>
<dbReference type="PANTHER" id="PTHR32120:SF11">
    <property type="entry name" value="SMALL RIBOSOMAL SUBUNIT BIOGENESIS GTPASE RSGA 1, MITOCHONDRIAL-RELATED"/>
    <property type="match status" value="1"/>
</dbReference>
<dbReference type="Pfam" id="PF03193">
    <property type="entry name" value="RsgA_GTPase"/>
    <property type="match status" value="1"/>
</dbReference>
<dbReference type="Pfam" id="PF16745">
    <property type="entry name" value="RsgA_N"/>
    <property type="match status" value="1"/>
</dbReference>
<dbReference type="SUPFAM" id="SSF50249">
    <property type="entry name" value="Nucleic acid-binding proteins"/>
    <property type="match status" value="1"/>
</dbReference>
<dbReference type="SUPFAM" id="SSF52540">
    <property type="entry name" value="P-loop containing nucleoside triphosphate hydrolases"/>
    <property type="match status" value="1"/>
</dbReference>
<dbReference type="PROSITE" id="PS50936">
    <property type="entry name" value="ENGC_GTPASE"/>
    <property type="match status" value="1"/>
</dbReference>
<dbReference type="PROSITE" id="PS51721">
    <property type="entry name" value="G_CP"/>
    <property type="match status" value="1"/>
</dbReference>
<proteinExistence type="inferred from homology"/>
<gene>
    <name evidence="1" type="primary">rsgA</name>
    <name type="ordered locus">GFO_0345</name>
</gene>
<organism>
    <name type="scientific">Christiangramia forsetii (strain DSM 17595 / CGMCC 1.15422 / KT0803)</name>
    <name type="common">Gramella forsetii</name>
    <dbReference type="NCBI Taxonomy" id="411154"/>
    <lineage>
        <taxon>Bacteria</taxon>
        <taxon>Pseudomonadati</taxon>
        <taxon>Bacteroidota</taxon>
        <taxon>Flavobacteriia</taxon>
        <taxon>Flavobacteriales</taxon>
        <taxon>Flavobacteriaceae</taxon>
        <taxon>Christiangramia</taxon>
    </lineage>
</organism>
<sequence length="315" mass="35806">MQGTVYKSTGSWYQVKAEDGKFYECRIKGKFRIQGIKSTNPVAVGDEVSFDLEEGVEEKTGVIKKIKERENYIIRKSVNLSKQTHIIASNIDQVFLLITLNNPPTLTTFIDRFLVTAEAYDITAVLLFNKVDTYSIEELAEVKYLAELYRSAGYECIGISAKNGKNVDKVKDKMIGNTSMISGHSGTGKSTLINAIEPALDLKTSEISRQHSQGQHTTTFAEMFDLSFNARIIDTPGIKGFGVVDMDREEIGDYFPEFFERKQDCKFHNCLHIEEPKCAIKDSLEEGEIAWSRYKSYLQIMEGEEDNYRVDQYQK</sequence>
<comment type="function">
    <text evidence="1">One of several proteins that assist in the late maturation steps of the functional core of the 30S ribosomal subunit. Helps release RbfA from mature subunits. May play a role in the assembly of ribosomal proteins into the subunit. Circularly permuted GTPase that catalyzes slow GTP hydrolysis, GTPase activity is stimulated by the 30S ribosomal subunit.</text>
</comment>
<comment type="cofactor">
    <cofactor evidence="1">
        <name>Zn(2+)</name>
        <dbReference type="ChEBI" id="CHEBI:29105"/>
    </cofactor>
    <text evidence="1">Binds 1 zinc ion per subunit.</text>
</comment>
<comment type="subunit">
    <text evidence="1">Monomer. Associates with 30S ribosomal subunit, binds 16S rRNA.</text>
</comment>
<comment type="subcellular location">
    <subcellularLocation>
        <location evidence="1">Cytoplasm</location>
    </subcellularLocation>
</comment>
<comment type="similarity">
    <text evidence="1">Belongs to the TRAFAC class YlqF/YawG GTPase family. RsgA subfamily.</text>
</comment>
<protein>
    <recommendedName>
        <fullName evidence="1">Small ribosomal subunit biogenesis GTPase RsgA</fullName>
        <ecNumber evidence="1">3.6.1.-</ecNumber>
    </recommendedName>
</protein>
<accession>A0LY86</accession>
<name>RSGA_CHRFK</name>
<reference key="1">
    <citation type="journal article" date="2006" name="Environ. Microbiol.">
        <title>Whole genome analysis of the marine Bacteroidetes'Gramella forsetii' reveals adaptations to degradation of polymeric organic matter.</title>
        <authorList>
            <person name="Bauer M."/>
            <person name="Kube M."/>
            <person name="Teeling H."/>
            <person name="Richter M."/>
            <person name="Lombardot T."/>
            <person name="Allers E."/>
            <person name="Wuerdemann C.A."/>
            <person name="Quast C."/>
            <person name="Kuhl H."/>
            <person name="Knaust F."/>
            <person name="Woebken D."/>
            <person name="Bischof K."/>
            <person name="Mussmann M."/>
            <person name="Choudhuri J.V."/>
            <person name="Meyer F."/>
            <person name="Reinhardt R."/>
            <person name="Amann R.I."/>
            <person name="Gloeckner F.O."/>
        </authorList>
    </citation>
    <scope>NUCLEOTIDE SEQUENCE [LARGE SCALE GENOMIC DNA]</scope>
    <source>
        <strain>DSM 17595 / CGMCC 1.15422 / KT0803</strain>
    </source>
</reference>
<feature type="chain" id="PRO_1000188081" description="Small ribosomal subunit biogenesis GTPase RsgA">
    <location>
        <begin position="1"/>
        <end position="315"/>
    </location>
</feature>
<feature type="domain" description="CP-type G" evidence="2">
    <location>
        <begin position="80"/>
        <end position="241"/>
    </location>
</feature>
<feature type="binding site" evidence="1">
    <location>
        <begin position="129"/>
        <end position="132"/>
    </location>
    <ligand>
        <name>GTP</name>
        <dbReference type="ChEBI" id="CHEBI:37565"/>
    </ligand>
</feature>
<feature type="binding site" evidence="1">
    <location>
        <begin position="183"/>
        <end position="191"/>
    </location>
    <ligand>
        <name>GTP</name>
        <dbReference type="ChEBI" id="CHEBI:37565"/>
    </ligand>
</feature>
<feature type="binding site" evidence="1">
    <location>
        <position position="265"/>
    </location>
    <ligand>
        <name>Zn(2+)</name>
        <dbReference type="ChEBI" id="CHEBI:29105"/>
    </ligand>
</feature>
<feature type="binding site" evidence="1">
    <location>
        <position position="270"/>
    </location>
    <ligand>
        <name>Zn(2+)</name>
        <dbReference type="ChEBI" id="CHEBI:29105"/>
    </ligand>
</feature>
<feature type="binding site" evidence="1">
    <location>
        <position position="272"/>
    </location>
    <ligand>
        <name>Zn(2+)</name>
        <dbReference type="ChEBI" id="CHEBI:29105"/>
    </ligand>
</feature>
<feature type="binding site" evidence="1">
    <location>
        <position position="278"/>
    </location>
    <ligand>
        <name>Zn(2+)</name>
        <dbReference type="ChEBI" id="CHEBI:29105"/>
    </ligand>
</feature>
<evidence type="ECO:0000255" key="1">
    <source>
        <dbReference type="HAMAP-Rule" id="MF_01820"/>
    </source>
</evidence>
<evidence type="ECO:0000255" key="2">
    <source>
        <dbReference type="PROSITE-ProRule" id="PRU01058"/>
    </source>
</evidence>
<keyword id="KW-0963">Cytoplasm</keyword>
<keyword id="KW-0342">GTP-binding</keyword>
<keyword id="KW-0378">Hydrolase</keyword>
<keyword id="KW-0479">Metal-binding</keyword>
<keyword id="KW-0547">Nucleotide-binding</keyword>
<keyword id="KW-0690">Ribosome biogenesis</keyword>
<keyword id="KW-0694">RNA-binding</keyword>
<keyword id="KW-0699">rRNA-binding</keyword>
<keyword id="KW-0862">Zinc</keyword>